<evidence type="ECO:0000269" key="1">
    <source>
    </source>
</evidence>
<evidence type="ECO:0000269" key="2">
    <source>
    </source>
</evidence>
<evidence type="ECO:0000303" key="3">
    <source>
    </source>
</evidence>
<evidence type="ECO:0000305" key="4"/>
<keyword id="KW-0025">Alternative splicing</keyword>
<keyword id="KW-1185">Reference proteome</keyword>
<keyword id="KW-0677">Repeat</keyword>
<keyword id="KW-0808">Transferase</keyword>
<keyword id="KW-0833">Ubl conjugation pathway</keyword>
<comment type="function">
    <text evidence="2">Functions as an E3 ubiquitin-protein ligase. Prevents premature senescence probably by targeting proteins involved in this process for degradation. Promotes the degradation of AAO3 and thus represses abscisic acid (ABA) biosynthesis.</text>
</comment>
<comment type="catalytic activity">
    <reaction>
        <text>S-ubiquitinyl-[E2 ubiquitin-conjugating enzyme]-L-cysteine + [acceptor protein]-L-lysine = [E2 ubiquitin-conjugating enzyme]-L-cysteine + N(6)-ubiquitinyl-[acceptor protein]-L-lysine.</text>
        <dbReference type="EC" id="2.3.2.27"/>
    </reaction>
</comment>
<comment type="pathway">
    <text>Protein modification; protein ubiquitination.</text>
</comment>
<comment type="subunit">
    <text evidence="1 2">Interacts with AAO3. Binds to SD129.</text>
</comment>
<comment type="interaction">
    <interactant intactId="EBI-4466572">
        <id>Q9LM76</id>
    </interactant>
    <interactant intactId="EBI-4430930">
        <id>Q8GY72</id>
        <label>At5g03050/F15A17_80</label>
    </interactant>
    <organismsDiffer>false</organismsDiffer>
    <experiments>4</experiments>
</comment>
<comment type="interaction">
    <interactant intactId="EBI-4466572">
        <id>Q9LM76</id>
    </interactant>
    <interactant intactId="EBI-1238421">
        <id>Q9SL70</id>
        <label>TCX6</label>
    </interactant>
    <organismsDiffer>false</organismsDiffer>
    <experiments>3</experiments>
</comment>
<comment type="alternative products">
    <event type="alternative splicing"/>
    <isoform>
        <id>Q9LM76-1</id>
        <name>1</name>
        <sequence type="displayed"/>
    </isoform>
    <isoform>
        <id>Q9LM76-2</id>
        <name>2</name>
        <sequence type="described" ref="VSP_031883 VSP_031884"/>
    </isoform>
</comment>
<comment type="tissue specificity">
    <text evidence="2">Expressed in leaves, root vasculature and guard cells.</text>
</comment>
<comment type="disruption phenotype">
    <text evidence="2">Premature senescence under low light conditions accompanied by enhanced ABA biosynthesis, accumulation of AAO3, and reduced photosynthetic capacity.</text>
</comment>
<comment type="miscellaneous">
    <molecule>Isoform 2</molecule>
    <text evidence="4">May be due to a competing acceptor splice site.</text>
</comment>
<accession>Q9LM76</accession>
<accession>Q93YT4</accession>
<gene>
    <name type="primary">PUB44</name>
    <name type="synonym">SAUL1</name>
    <name type="ordered locus">At1g20780</name>
    <name type="ORF">F2D10.27</name>
</gene>
<feature type="chain" id="PRO_0000322184" description="U-box domain-containing protein 44">
    <location>
        <begin position="1"/>
        <end position="801"/>
    </location>
</feature>
<feature type="domain" description="U-box">
    <location>
        <begin position="22"/>
        <end position="101"/>
    </location>
</feature>
<feature type="repeat" description="ARM 1">
    <location>
        <begin position="134"/>
        <end position="173"/>
    </location>
</feature>
<feature type="repeat" description="ARM 2">
    <location>
        <begin position="176"/>
        <end position="215"/>
    </location>
</feature>
<feature type="repeat" description="ARM 3">
    <location>
        <begin position="218"/>
        <end position="259"/>
    </location>
</feature>
<feature type="repeat" description="ARM 4">
    <location>
        <begin position="261"/>
        <end position="300"/>
    </location>
</feature>
<feature type="repeat" description="ARM 5">
    <location>
        <begin position="301"/>
        <end position="340"/>
    </location>
</feature>
<feature type="repeat" description="ARM 6">
    <location>
        <begin position="342"/>
        <end position="386"/>
    </location>
</feature>
<feature type="repeat" description="ARM 7">
    <location>
        <begin position="390"/>
        <end position="429"/>
    </location>
</feature>
<feature type="repeat" description="ARM 8">
    <location>
        <begin position="435"/>
        <end position="475"/>
    </location>
</feature>
<feature type="repeat" description="ARM 9">
    <location>
        <begin position="480"/>
        <end position="521"/>
    </location>
</feature>
<feature type="splice variant" id="VSP_031883" description="In isoform 2." evidence="3">
    <original>VSATILAN</original>
    <variation>SGESAPSN</variation>
    <location>
        <begin position="376"/>
        <end position="383"/>
    </location>
</feature>
<feature type="splice variant" id="VSP_031884" description="In isoform 2." evidence="3">
    <location>
        <begin position="384"/>
        <end position="801"/>
    </location>
</feature>
<reference key="1">
    <citation type="journal article" date="2000" name="Nature">
        <title>Sequence and analysis of chromosome 1 of the plant Arabidopsis thaliana.</title>
        <authorList>
            <person name="Theologis A."/>
            <person name="Ecker J.R."/>
            <person name="Palm C.J."/>
            <person name="Federspiel N.A."/>
            <person name="Kaul S."/>
            <person name="White O."/>
            <person name="Alonso J."/>
            <person name="Altafi H."/>
            <person name="Araujo R."/>
            <person name="Bowman C.L."/>
            <person name="Brooks S.Y."/>
            <person name="Buehler E."/>
            <person name="Chan A."/>
            <person name="Chao Q."/>
            <person name="Chen H."/>
            <person name="Cheuk R.F."/>
            <person name="Chin C.W."/>
            <person name="Chung M.K."/>
            <person name="Conn L."/>
            <person name="Conway A.B."/>
            <person name="Conway A.R."/>
            <person name="Creasy T.H."/>
            <person name="Dewar K."/>
            <person name="Dunn P."/>
            <person name="Etgu P."/>
            <person name="Feldblyum T.V."/>
            <person name="Feng J.-D."/>
            <person name="Fong B."/>
            <person name="Fujii C.Y."/>
            <person name="Gill J.E."/>
            <person name="Goldsmith A.D."/>
            <person name="Haas B."/>
            <person name="Hansen N.F."/>
            <person name="Hughes B."/>
            <person name="Huizar L."/>
            <person name="Hunter J.L."/>
            <person name="Jenkins J."/>
            <person name="Johnson-Hopson C."/>
            <person name="Khan S."/>
            <person name="Khaykin E."/>
            <person name="Kim C.J."/>
            <person name="Koo H.L."/>
            <person name="Kremenetskaia I."/>
            <person name="Kurtz D.B."/>
            <person name="Kwan A."/>
            <person name="Lam B."/>
            <person name="Langin-Hooper S."/>
            <person name="Lee A."/>
            <person name="Lee J.M."/>
            <person name="Lenz C.A."/>
            <person name="Li J.H."/>
            <person name="Li Y.-P."/>
            <person name="Lin X."/>
            <person name="Liu S.X."/>
            <person name="Liu Z.A."/>
            <person name="Luros J.S."/>
            <person name="Maiti R."/>
            <person name="Marziali A."/>
            <person name="Militscher J."/>
            <person name="Miranda M."/>
            <person name="Nguyen M."/>
            <person name="Nierman W.C."/>
            <person name="Osborne B.I."/>
            <person name="Pai G."/>
            <person name="Peterson J."/>
            <person name="Pham P.K."/>
            <person name="Rizzo M."/>
            <person name="Rooney T."/>
            <person name="Rowley D."/>
            <person name="Sakano H."/>
            <person name="Salzberg S.L."/>
            <person name="Schwartz J.R."/>
            <person name="Shinn P."/>
            <person name="Southwick A.M."/>
            <person name="Sun H."/>
            <person name="Tallon L.J."/>
            <person name="Tambunga G."/>
            <person name="Toriumi M.J."/>
            <person name="Town C.D."/>
            <person name="Utterback T."/>
            <person name="Van Aken S."/>
            <person name="Vaysberg M."/>
            <person name="Vysotskaia V.S."/>
            <person name="Walker M."/>
            <person name="Wu D."/>
            <person name="Yu G."/>
            <person name="Fraser C.M."/>
            <person name="Venter J.C."/>
            <person name="Davis R.W."/>
        </authorList>
    </citation>
    <scope>NUCLEOTIDE SEQUENCE [LARGE SCALE GENOMIC DNA]</scope>
    <source>
        <strain>cv. Columbia</strain>
    </source>
</reference>
<reference key="2">
    <citation type="journal article" date="2017" name="Plant J.">
        <title>Araport11: a complete reannotation of the Arabidopsis thaliana reference genome.</title>
        <authorList>
            <person name="Cheng C.Y."/>
            <person name="Krishnakumar V."/>
            <person name="Chan A.P."/>
            <person name="Thibaud-Nissen F."/>
            <person name="Schobel S."/>
            <person name="Town C.D."/>
        </authorList>
    </citation>
    <scope>GENOME REANNOTATION</scope>
    <source>
        <strain>cv. Columbia</strain>
    </source>
</reference>
<reference key="3">
    <citation type="journal article" date="2003" name="Science">
        <title>Empirical analysis of transcriptional activity in the Arabidopsis genome.</title>
        <authorList>
            <person name="Yamada K."/>
            <person name="Lim J."/>
            <person name="Dale J.M."/>
            <person name="Chen H."/>
            <person name="Shinn P."/>
            <person name="Palm C.J."/>
            <person name="Southwick A.M."/>
            <person name="Wu H.C."/>
            <person name="Kim C.J."/>
            <person name="Nguyen M."/>
            <person name="Pham P.K."/>
            <person name="Cheuk R.F."/>
            <person name="Karlin-Newmann G."/>
            <person name="Liu S.X."/>
            <person name="Lam B."/>
            <person name="Sakano H."/>
            <person name="Wu T."/>
            <person name="Yu G."/>
            <person name="Miranda M."/>
            <person name="Quach H.L."/>
            <person name="Tripp M."/>
            <person name="Chang C.H."/>
            <person name="Lee J.M."/>
            <person name="Toriumi M.J."/>
            <person name="Chan M.M."/>
            <person name="Tang C.C."/>
            <person name="Onodera C.S."/>
            <person name="Deng J.M."/>
            <person name="Akiyama K."/>
            <person name="Ansari Y."/>
            <person name="Arakawa T."/>
            <person name="Banh J."/>
            <person name="Banno F."/>
            <person name="Bowser L."/>
            <person name="Brooks S.Y."/>
            <person name="Carninci P."/>
            <person name="Chao Q."/>
            <person name="Choy N."/>
            <person name="Enju A."/>
            <person name="Goldsmith A.D."/>
            <person name="Gurjal M."/>
            <person name="Hansen N.F."/>
            <person name="Hayashizaki Y."/>
            <person name="Johnson-Hopson C."/>
            <person name="Hsuan V.W."/>
            <person name="Iida K."/>
            <person name="Karnes M."/>
            <person name="Khan S."/>
            <person name="Koesema E."/>
            <person name="Ishida J."/>
            <person name="Jiang P.X."/>
            <person name="Jones T."/>
            <person name="Kawai J."/>
            <person name="Kamiya A."/>
            <person name="Meyers C."/>
            <person name="Nakajima M."/>
            <person name="Narusaka M."/>
            <person name="Seki M."/>
            <person name="Sakurai T."/>
            <person name="Satou M."/>
            <person name="Tamse R."/>
            <person name="Vaysberg M."/>
            <person name="Wallender E.K."/>
            <person name="Wong C."/>
            <person name="Yamamura Y."/>
            <person name="Yuan S."/>
            <person name="Shinozaki K."/>
            <person name="Davis R.W."/>
            <person name="Theologis A."/>
            <person name="Ecker J.R."/>
        </authorList>
    </citation>
    <scope>NUCLEOTIDE SEQUENCE [LARGE SCALE MRNA] (ISOFORM 2)</scope>
    <source>
        <strain>cv. Columbia</strain>
    </source>
</reference>
<reference key="4">
    <citation type="journal article" date="2004" name="Plant Physiol.">
        <title>A large complement of the predicted Arabidopsis ARM repeat proteins are members of the U-box E3 ubiquitin ligase family.</title>
        <authorList>
            <person name="Mudgil Y."/>
            <person name="Shiu S.-H."/>
            <person name="Stone S.L."/>
            <person name="Salt J.N."/>
            <person name="Goring D.R."/>
        </authorList>
    </citation>
    <scope>GENE FAMILY ORGANIZATION</scope>
</reference>
<reference key="5">
    <citation type="journal article" date="2008" name="Plant Physiol.">
        <title>Interactions between the S-domain receptor kinases and AtPUB-ARM E3 ubiquitin ligases suggest a conserved signaling pathway in Arabidopsis.</title>
        <authorList>
            <person name="Samuel M.A."/>
            <person name="Mudgil Y."/>
            <person name="Salt J.N."/>
            <person name="Delmas F."/>
            <person name="Ramachandran S."/>
            <person name="Chilelli A."/>
            <person name="Goring D.R."/>
        </authorList>
    </citation>
    <scope>INTERACTION WITH SD129</scope>
</reference>
<reference key="6">
    <citation type="journal article" date="2009" name="Plant J.">
        <title>Identification of a novel E3 ubiquitin ligase that is required for suppression of premature senescence in Arabidopsis.</title>
        <authorList>
            <person name="Raab S."/>
            <person name="Drechsel G."/>
            <person name="Zarepour M."/>
            <person name="Hartung W."/>
            <person name="Koshiba T."/>
            <person name="Bittner F."/>
            <person name="Hoth S."/>
        </authorList>
    </citation>
    <scope>FUNCTION</scope>
    <scope>DISRUPTION PHENOTYPE</scope>
    <scope>TISSUE SPECIFICITY</scope>
    <scope>INTERACTION WITH AAO3</scope>
</reference>
<organism>
    <name type="scientific">Arabidopsis thaliana</name>
    <name type="common">Mouse-ear cress</name>
    <dbReference type="NCBI Taxonomy" id="3702"/>
    <lineage>
        <taxon>Eukaryota</taxon>
        <taxon>Viridiplantae</taxon>
        <taxon>Streptophyta</taxon>
        <taxon>Embryophyta</taxon>
        <taxon>Tracheophyta</taxon>
        <taxon>Spermatophyta</taxon>
        <taxon>Magnoliopsida</taxon>
        <taxon>eudicotyledons</taxon>
        <taxon>Gunneridae</taxon>
        <taxon>Pentapetalae</taxon>
        <taxon>rosids</taxon>
        <taxon>malvids</taxon>
        <taxon>Brassicales</taxon>
        <taxon>Brassicaceae</taxon>
        <taxon>Camelineae</taxon>
        <taxon>Arabidopsis</taxon>
    </lineage>
</organism>
<proteinExistence type="evidence at protein level"/>
<name>PUB44_ARATH</name>
<dbReference type="EC" id="2.3.2.27"/>
<dbReference type="EMBL" id="AC069251">
    <property type="protein sequence ID" value="AAF80621.1"/>
    <property type="molecule type" value="Genomic_DNA"/>
</dbReference>
<dbReference type="EMBL" id="CP002684">
    <property type="protein sequence ID" value="AEE30021.1"/>
    <property type="molecule type" value="Genomic_DNA"/>
</dbReference>
<dbReference type="EMBL" id="CP002684">
    <property type="protein sequence ID" value="ANM60921.1"/>
    <property type="molecule type" value="Genomic_DNA"/>
</dbReference>
<dbReference type="EMBL" id="CP002684">
    <property type="protein sequence ID" value="ANM60922.1"/>
    <property type="molecule type" value="Genomic_DNA"/>
</dbReference>
<dbReference type="EMBL" id="AY059775">
    <property type="protein sequence ID" value="AAL24123.1"/>
    <property type="molecule type" value="mRNA"/>
</dbReference>
<dbReference type="EMBL" id="AY096753">
    <property type="protein sequence ID" value="AAM20387.1"/>
    <property type="molecule type" value="mRNA"/>
</dbReference>
<dbReference type="RefSeq" id="NP_001323169.1">
    <molecule id="Q9LM76-1"/>
    <property type="nucleotide sequence ID" value="NM_001332466.1"/>
</dbReference>
<dbReference type="RefSeq" id="NP_001323170.1">
    <molecule id="Q9LM76-1"/>
    <property type="nucleotide sequence ID" value="NM_001332465.1"/>
</dbReference>
<dbReference type="RefSeq" id="NP_564125.2">
    <molecule id="Q9LM76-1"/>
    <property type="nucleotide sequence ID" value="NM_101930.4"/>
</dbReference>
<dbReference type="SASBDB" id="Q9LM76"/>
<dbReference type="SMR" id="Q9LM76"/>
<dbReference type="BioGRID" id="23907">
    <property type="interactions" value="3"/>
</dbReference>
<dbReference type="FunCoup" id="Q9LM76">
    <property type="interactions" value="626"/>
</dbReference>
<dbReference type="IntAct" id="Q9LM76">
    <property type="interactions" value="2"/>
</dbReference>
<dbReference type="STRING" id="3702.Q9LM76"/>
<dbReference type="iPTMnet" id="Q9LM76"/>
<dbReference type="PaxDb" id="3702-AT1G20780.1"/>
<dbReference type="ProteomicsDB" id="226250">
    <molecule id="Q9LM76-1"/>
</dbReference>
<dbReference type="EnsemblPlants" id="AT1G20780.1">
    <molecule id="Q9LM76-1"/>
    <property type="protein sequence ID" value="AT1G20780.1"/>
    <property type="gene ID" value="AT1G20780"/>
</dbReference>
<dbReference type="EnsemblPlants" id="AT1G20780.2">
    <molecule id="Q9LM76-1"/>
    <property type="protein sequence ID" value="AT1G20780.2"/>
    <property type="gene ID" value="AT1G20780"/>
</dbReference>
<dbReference type="EnsemblPlants" id="AT1G20780.3">
    <molecule id="Q9LM76-1"/>
    <property type="protein sequence ID" value="AT1G20780.3"/>
    <property type="gene ID" value="AT1G20780"/>
</dbReference>
<dbReference type="GeneID" id="838668"/>
<dbReference type="Gramene" id="AT1G20780.1">
    <molecule id="Q9LM76-1"/>
    <property type="protein sequence ID" value="AT1G20780.1"/>
    <property type="gene ID" value="AT1G20780"/>
</dbReference>
<dbReference type="Gramene" id="AT1G20780.2">
    <molecule id="Q9LM76-1"/>
    <property type="protein sequence ID" value="AT1G20780.2"/>
    <property type="gene ID" value="AT1G20780"/>
</dbReference>
<dbReference type="Gramene" id="AT1G20780.3">
    <molecule id="Q9LM76-1"/>
    <property type="protein sequence ID" value="AT1G20780.3"/>
    <property type="gene ID" value="AT1G20780"/>
</dbReference>
<dbReference type="KEGG" id="ath:AT1G20780"/>
<dbReference type="Araport" id="AT1G20780"/>
<dbReference type="TAIR" id="AT1G20780">
    <property type="gene designation" value="SAUL1"/>
</dbReference>
<dbReference type="eggNOG" id="KOG0167">
    <property type="taxonomic scope" value="Eukaryota"/>
</dbReference>
<dbReference type="HOGENOM" id="CLU_004912_0_0_1"/>
<dbReference type="InParanoid" id="Q9LM76"/>
<dbReference type="OMA" id="KVHRGTC"/>
<dbReference type="OrthoDB" id="10064100at2759"/>
<dbReference type="PhylomeDB" id="Q9LM76"/>
<dbReference type="UniPathway" id="UPA00143"/>
<dbReference type="PRO" id="PR:Q9LM76"/>
<dbReference type="Proteomes" id="UP000006548">
    <property type="component" value="Chromosome 1"/>
</dbReference>
<dbReference type="ExpressionAtlas" id="Q9LM76">
    <property type="expression patterns" value="baseline and differential"/>
</dbReference>
<dbReference type="GO" id="GO:0005737">
    <property type="term" value="C:cytoplasm"/>
    <property type="evidence" value="ECO:0000314"/>
    <property type="project" value="TAIR"/>
</dbReference>
<dbReference type="GO" id="GO:0005634">
    <property type="term" value="C:nucleus"/>
    <property type="evidence" value="ECO:0000314"/>
    <property type="project" value="TAIR"/>
</dbReference>
<dbReference type="GO" id="GO:0005886">
    <property type="term" value="C:plasma membrane"/>
    <property type="evidence" value="ECO:0000314"/>
    <property type="project" value="TAIR"/>
</dbReference>
<dbReference type="GO" id="GO:0070696">
    <property type="term" value="F:transmembrane receptor protein serine/threonine kinase binding"/>
    <property type="evidence" value="ECO:0000353"/>
    <property type="project" value="UniProtKB"/>
</dbReference>
<dbReference type="GO" id="GO:0004842">
    <property type="term" value="F:ubiquitin-protein transferase activity"/>
    <property type="evidence" value="ECO:0000314"/>
    <property type="project" value="TAIR"/>
</dbReference>
<dbReference type="GO" id="GO:0010150">
    <property type="term" value="P:leaf senescence"/>
    <property type="evidence" value="ECO:0000315"/>
    <property type="project" value="TAIR"/>
</dbReference>
<dbReference type="GO" id="GO:0090359">
    <property type="term" value="P:negative regulation of abscisic acid biosynthetic process"/>
    <property type="evidence" value="ECO:0000315"/>
    <property type="project" value="UniProtKB"/>
</dbReference>
<dbReference type="GO" id="GO:0016567">
    <property type="term" value="P:protein ubiquitination"/>
    <property type="evidence" value="ECO:0007669"/>
    <property type="project" value="UniProtKB-UniPathway"/>
</dbReference>
<dbReference type="GO" id="GO:0010115">
    <property type="term" value="P:regulation of abscisic acid biosynthetic process"/>
    <property type="evidence" value="ECO:0000315"/>
    <property type="project" value="TAIR"/>
</dbReference>
<dbReference type="GO" id="GO:0010380">
    <property type="term" value="P:regulation of chlorophyll biosynthetic process"/>
    <property type="evidence" value="ECO:0000315"/>
    <property type="project" value="TAIR"/>
</dbReference>
<dbReference type="GO" id="GO:0010271">
    <property type="term" value="P:regulation of chlorophyll catabolic process"/>
    <property type="evidence" value="ECO:0000315"/>
    <property type="project" value="TAIR"/>
</dbReference>
<dbReference type="CDD" id="cd16664">
    <property type="entry name" value="RING-Ubox_PUB"/>
    <property type="match status" value="1"/>
</dbReference>
<dbReference type="FunFam" id="1.25.10.10:FF:000857">
    <property type="entry name" value="RING-type E3 ubiquitin transferase"/>
    <property type="match status" value="1"/>
</dbReference>
<dbReference type="FunFam" id="1.25.10.10:FF:001044">
    <property type="entry name" value="RING-type E3 ubiquitin transferase"/>
    <property type="match status" value="1"/>
</dbReference>
<dbReference type="FunFam" id="1.25.10.10:FF:001045">
    <property type="entry name" value="RING-type E3 ubiquitin transferase"/>
    <property type="match status" value="1"/>
</dbReference>
<dbReference type="FunFam" id="3.30.40.10:FF:001028">
    <property type="entry name" value="RING-type E3 ubiquitin transferase"/>
    <property type="match status" value="1"/>
</dbReference>
<dbReference type="Gene3D" id="1.25.10.10">
    <property type="entry name" value="Leucine-rich Repeat Variant"/>
    <property type="match status" value="3"/>
</dbReference>
<dbReference type="Gene3D" id="3.30.40.10">
    <property type="entry name" value="Zinc/RING finger domain, C3HC4 (zinc finger)"/>
    <property type="match status" value="1"/>
</dbReference>
<dbReference type="InterPro" id="IPR011989">
    <property type="entry name" value="ARM-like"/>
</dbReference>
<dbReference type="InterPro" id="IPR016024">
    <property type="entry name" value="ARM-type_fold"/>
</dbReference>
<dbReference type="InterPro" id="IPR000225">
    <property type="entry name" value="Armadillo"/>
</dbReference>
<dbReference type="InterPro" id="IPR045210">
    <property type="entry name" value="RING-Ubox_PUB"/>
</dbReference>
<dbReference type="InterPro" id="IPR052608">
    <property type="entry name" value="U-box_domain_protein"/>
</dbReference>
<dbReference type="InterPro" id="IPR003613">
    <property type="entry name" value="Ubox_domain"/>
</dbReference>
<dbReference type="InterPro" id="IPR013083">
    <property type="entry name" value="Znf_RING/FYVE/PHD"/>
</dbReference>
<dbReference type="PANTHER" id="PTHR45958">
    <property type="entry name" value="RING-TYPE E3 UBIQUITIN TRANSFERASE"/>
    <property type="match status" value="1"/>
</dbReference>
<dbReference type="PANTHER" id="PTHR45958:SF13">
    <property type="entry name" value="U-BOX DOMAIN-CONTAINING PROTEIN 44"/>
    <property type="match status" value="1"/>
</dbReference>
<dbReference type="Pfam" id="PF00514">
    <property type="entry name" value="Arm"/>
    <property type="match status" value="1"/>
</dbReference>
<dbReference type="Pfam" id="PF04564">
    <property type="entry name" value="U-box"/>
    <property type="match status" value="1"/>
</dbReference>
<dbReference type="SMART" id="SM00185">
    <property type="entry name" value="ARM"/>
    <property type="match status" value="8"/>
</dbReference>
<dbReference type="SMART" id="SM00504">
    <property type="entry name" value="Ubox"/>
    <property type="match status" value="1"/>
</dbReference>
<dbReference type="SUPFAM" id="SSF48371">
    <property type="entry name" value="ARM repeat"/>
    <property type="match status" value="2"/>
</dbReference>
<dbReference type="SUPFAM" id="SSF57850">
    <property type="entry name" value="RING/U-box"/>
    <property type="match status" value="1"/>
</dbReference>
<dbReference type="PROSITE" id="PS50176">
    <property type="entry name" value="ARM_REPEAT"/>
    <property type="match status" value="1"/>
</dbReference>
<dbReference type="PROSITE" id="PS51698">
    <property type="entry name" value="U_BOX"/>
    <property type="match status" value="1"/>
</dbReference>
<sequence>MVGSSDGDQSDDSSHFERGVDHIYEAFICPLTKEVMHDPVTLENGRTFEREAIEKWFKECRDSGRPPSCPLTSQELTSTDVSASIALRNTIEEWRSRNDAAKLDIARQSLFLGNAETDILQALMHVRQICRTIRSNRHGVRNSQLIHMIIDMLKSTSHRVRYKALQTLQVVVEGDDESKAIVAEGDTVRTLVKFLSHEPSKGREAAVSLLFELSKSEALCEKIGSIHGALILLVGLTSSNSENVSIVEKADRTLENMERSEEIVRQMASYGRLQPLLGKLLEGSPETKLSMASFLGELPLNNDVKVLVAQTVGSSLVDLMRSGDMPQREAALKALNKISSFEGSAKVLISKGILPPLIKDLFYVGPNNLPIRLKEVSATILANIVNIGYDFDKATLVSENRVENLLHLISNTGPAIQCKLLEVLVGLTSCPKTVPKVVYAIKTSGAIISLVQFIEVRENDDLRLASIKLLHNLSPFMSEELAKALCGTAGQLGSLVAIISEKTPITEEQAAAAGLLAELPDRDLGLTQEMLEVGAFEKIISKVFGIRQGDIKGMRFVNPFLEGLVRILARITFVFNKEARAINFCREHDVASLFLHLLQSNGQDNIQMVSAMALENLSLESIKLTRMPDPPPVNYCGSIFSCVRKPHVVNGLCKIHQGICSLRETFCLVEGGAVEKLVALLDHENVKVVEAALAALSSLLEDGLDVEKGVKILDEADGIRHILNVLRENRTERLTRRAVWMVERILRIEDIAREVAEEQSLSAALVDAFQNADFRTRQIAENALKHIDKIPNFSSIFPNIA</sequence>
<protein>
    <recommendedName>
        <fullName>U-box domain-containing protein 44</fullName>
        <ecNumber>2.3.2.27</ecNumber>
    </recommendedName>
    <alternativeName>
        <fullName>Plant U-box protein 44</fullName>
    </alternativeName>
    <alternativeName>
        <fullName>Protein SENESCENCE-ASSOCIATED E3 UBIQUITIN LIGASE 1</fullName>
    </alternativeName>
    <alternativeName>
        <fullName evidence="4">RING-type E3 ubiquitin transferase PUB44</fullName>
    </alternativeName>
</protein>